<name>RECA_BARBK</name>
<evidence type="ECO:0000255" key="1">
    <source>
        <dbReference type="HAMAP-Rule" id="MF_00268"/>
    </source>
</evidence>
<reference key="1">
    <citation type="submission" date="2006-12" db="EMBL/GenBank/DDBJ databases">
        <authorList>
            <person name="Hendrix L."/>
            <person name="Mohamoud Y."/>
            <person name="Radune D."/>
            <person name="Shvartsbeyn A."/>
            <person name="Daugherty S."/>
            <person name="Dodson R."/>
            <person name="Durkin A.S."/>
            <person name="Harkins D."/>
            <person name="Huot H."/>
            <person name="Kothari S.P."/>
            <person name="Madupu R."/>
            <person name="Li J."/>
            <person name="Nelson W.C."/>
            <person name="Shrivastava S."/>
            <person name="Giglio M.G."/>
            <person name="Haft D."/>
            <person name="Selengut J."/>
            <person name="Fraser-Ligget C."/>
            <person name="Seshadri R."/>
        </authorList>
    </citation>
    <scope>NUCLEOTIDE SEQUENCE [LARGE SCALE GENOMIC DNA]</scope>
    <source>
        <strain>ATCC 35685 / KC583 / Herrer 020/F12,63</strain>
    </source>
</reference>
<dbReference type="EMBL" id="CP000524">
    <property type="protein sequence ID" value="ABM45622.1"/>
    <property type="molecule type" value="Genomic_DNA"/>
</dbReference>
<dbReference type="RefSeq" id="WP_005766971.1">
    <property type="nucleotide sequence ID" value="NC_008783.1"/>
</dbReference>
<dbReference type="SMR" id="A1USS3"/>
<dbReference type="STRING" id="360095.BARBAKC583_0727"/>
<dbReference type="GeneID" id="4684583"/>
<dbReference type="KEGG" id="bbk:BARBAKC583_0727"/>
<dbReference type="eggNOG" id="COG0468">
    <property type="taxonomic scope" value="Bacteria"/>
</dbReference>
<dbReference type="HOGENOM" id="CLU_040469_1_2_5"/>
<dbReference type="OrthoDB" id="9776733at2"/>
<dbReference type="Proteomes" id="UP000000643">
    <property type="component" value="Chromosome"/>
</dbReference>
<dbReference type="GO" id="GO:0005829">
    <property type="term" value="C:cytosol"/>
    <property type="evidence" value="ECO:0007669"/>
    <property type="project" value="TreeGrafter"/>
</dbReference>
<dbReference type="GO" id="GO:0005524">
    <property type="term" value="F:ATP binding"/>
    <property type="evidence" value="ECO:0007669"/>
    <property type="project" value="UniProtKB-UniRule"/>
</dbReference>
<dbReference type="GO" id="GO:0016887">
    <property type="term" value="F:ATP hydrolysis activity"/>
    <property type="evidence" value="ECO:0007669"/>
    <property type="project" value="InterPro"/>
</dbReference>
<dbReference type="GO" id="GO:0140664">
    <property type="term" value="F:ATP-dependent DNA damage sensor activity"/>
    <property type="evidence" value="ECO:0007669"/>
    <property type="project" value="InterPro"/>
</dbReference>
<dbReference type="GO" id="GO:0003684">
    <property type="term" value="F:damaged DNA binding"/>
    <property type="evidence" value="ECO:0007669"/>
    <property type="project" value="UniProtKB-UniRule"/>
</dbReference>
<dbReference type="GO" id="GO:0003697">
    <property type="term" value="F:single-stranded DNA binding"/>
    <property type="evidence" value="ECO:0007669"/>
    <property type="project" value="UniProtKB-UniRule"/>
</dbReference>
<dbReference type="GO" id="GO:0006310">
    <property type="term" value="P:DNA recombination"/>
    <property type="evidence" value="ECO:0007669"/>
    <property type="project" value="UniProtKB-UniRule"/>
</dbReference>
<dbReference type="GO" id="GO:0006281">
    <property type="term" value="P:DNA repair"/>
    <property type="evidence" value="ECO:0007669"/>
    <property type="project" value="UniProtKB-UniRule"/>
</dbReference>
<dbReference type="GO" id="GO:0009432">
    <property type="term" value="P:SOS response"/>
    <property type="evidence" value="ECO:0007669"/>
    <property type="project" value="UniProtKB-UniRule"/>
</dbReference>
<dbReference type="CDD" id="cd00983">
    <property type="entry name" value="RecA"/>
    <property type="match status" value="1"/>
</dbReference>
<dbReference type="FunFam" id="3.40.50.300:FF:000087">
    <property type="entry name" value="Recombinase RecA"/>
    <property type="match status" value="1"/>
</dbReference>
<dbReference type="Gene3D" id="3.40.50.300">
    <property type="entry name" value="P-loop containing nucleotide triphosphate hydrolases"/>
    <property type="match status" value="1"/>
</dbReference>
<dbReference type="HAMAP" id="MF_00268">
    <property type="entry name" value="RecA"/>
    <property type="match status" value="1"/>
</dbReference>
<dbReference type="InterPro" id="IPR003593">
    <property type="entry name" value="AAA+_ATPase"/>
</dbReference>
<dbReference type="InterPro" id="IPR013765">
    <property type="entry name" value="DNA_recomb/repair_RecA"/>
</dbReference>
<dbReference type="InterPro" id="IPR020584">
    <property type="entry name" value="DNA_recomb/repair_RecA_CS"/>
</dbReference>
<dbReference type="InterPro" id="IPR027417">
    <property type="entry name" value="P-loop_NTPase"/>
</dbReference>
<dbReference type="InterPro" id="IPR049261">
    <property type="entry name" value="RecA-like_C"/>
</dbReference>
<dbReference type="InterPro" id="IPR049428">
    <property type="entry name" value="RecA-like_N"/>
</dbReference>
<dbReference type="InterPro" id="IPR020588">
    <property type="entry name" value="RecA_ATP-bd"/>
</dbReference>
<dbReference type="InterPro" id="IPR023400">
    <property type="entry name" value="RecA_C_sf"/>
</dbReference>
<dbReference type="InterPro" id="IPR020587">
    <property type="entry name" value="RecA_monomer-monomer_interface"/>
</dbReference>
<dbReference type="NCBIfam" id="TIGR02012">
    <property type="entry name" value="tigrfam_recA"/>
    <property type="match status" value="1"/>
</dbReference>
<dbReference type="PANTHER" id="PTHR45900:SF1">
    <property type="entry name" value="MITOCHONDRIAL DNA REPAIR PROTEIN RECA HOMOLOG-RELATED"/>
    <property type="match status" value="1"/>
</dbReference>
<dbReference type="PANTHER" id="PTHR45900">
    <property type="entry name" value="RECA"/>
    <property type="match status" value="1"/>
</dbReference>
<dbReference type="Pfam" id="PF00154">
    <property type="entry name" value="RecA"/>
    <property type="match status" value="1"/>
</dbReference>
<dbReference type="Pfam" id="PF21096">
    <property type="entry name" value="RecA_C"/>
    <property type="match status" value="1"/>
</dbReference>
<dbReference type="PRINTS" id="PR00142">
    <property type="entry name" value="RECA"/>
</dbReference>
<dbReference type="SMART" id="SM00382">
    <property type="entry name" value="AAA"/>
    <property type="match status" value="1"/>
</dbReference>
<dbReference type="SUPFAM" id="SSF52540">
    <property type="entry name" value="P-loop containing nucleoside triphosphate hydrolases"/>
    <property type="match status" value="1"/>
</dbReference>
<dbReference type="SUPFAM" id="SSF54752">
    <property type="entry name" value="RecA protein, C-terminal domain"/>
    <property type="match status" value="1"/>
</dbReference>
<dbReference type="PROSITE" id="PS00321">
    <property type="entry name" value="RECA_1"/>
    <property type="match status" value="1"/>
</dbReference>
<dbReference type="PROSITE" id="PS50162">
    <property type="entry name" value="RECA_2"/>
    <property type="match status" value="1"/>
</dbReference>
<dbReference type="PROSITE" id="PS50163">
    <property type="entry name" value="RECA_3"/>
    <property type="match status" value="1"/>
</dbReference>
<gene>
    <name evidence="1" type="primary">recA</name>
    <name type="ordered locus">BARBAKC583_0727</name>
</gene>
<feature type="chain" id="PRO_1000047890" description="Protein RecA">
    <location>
        <begin position="1"/>
        <end position="347"/>
    </location>
</feature>
<feature type="binding site" evidence="1">
    <location>
        <begin position="64"/>
        <end position="71"/>
    </location>
    <ligand>
        <name>ATP</name>
        <dbReference type="ChEBI" id="CHEBI:30616"/>
    </ligand>
</feature>
<comment type="function">
    <text evidence="1">Can catalyze the hydrolysis of ATP in the presence of single-stranded DNA, the ATP-dependent uptake of single-stranded DNA by duplex DNA, and the ATP-dependent hybridization of homologous single-stranded DNAs. It interacts with LexA causing its activation and leading to its autocatalytic cleavage.</text>
</comment>
<comment type="subcellular location">
    <subcellularLocation>
        <location evidence="1">Cytoplasm</location>
    </subcellularLocation>
</comment>
<comment type="similarity">
    <text evidence="1">Belongs to the RecA family.</text>
</comment>
<accession>A1USS3</accession>
<protein>
    <recommendedName>
        <fullName evidence="1">Protein RecA</fullName>
    </recommendedName>
    <alternativeName>
        <fullName evidence="1">Recombinase A</fullName>
    </alternativeName>
</protein>
<sequence length="347" mass="37466">MDKKKALDAALSQIERSFGKGSIMRLGQKEGVVEIETISTGSLSLDIALGVGGLPKGRIIEIYGPESSGKTTLALHAIAEAQKNGGVCAFVDAEHALDPIYARKLGVDLENLFVSQPDTGEQALEITETLVRSGAVDVLVVDSVAALTPRAEIDGEMSDSLPGLQARLMSKALRKLTASIFRSNCMVIFINQIRMKIGVMFGSPETTTGGNALKFYASVRLDIRRIGSIKDKELVVGNQTRVKVVKNKLAPPFKQVEFDIIYGEGISKLGELIDLGVKVGIVEKSGAWFSYNSQRLGQGRENAKQFLREHAEIAAEIETALRQNAGLLAIELLENVGADNIENDEEI</sequence>
<keyword id="KW-0067">ATP-binding</keyword>
<keyword id="KW-0963">Cytoplasm</keyword>
<keyword id="KW-0227">DNA damage</keyword>
<keyword id="KW-0233">DNA recombination</keyword>
<keyword id="KW-0234">DNA repair</keyword>
<keyword id="KW-0238">DNA-binding</keyword>
<keyword id="KW-0547">Nucleotide-binding</keyword>
<keyword id="KW-0742">SOS response</keyword>
<proteinExistence type="inferred from homology"/>
<organism>
    <name type="scientific">Bartonella bacilliformis (strain ATCC 35685 / KC583 / Herrer 020/F12,63)</name>
    <dbReference type="NCBI Taxonomy" id="360095"/>
    <lineage>
        <taxon>Bacteria</taxon>
        <taxon>Pseudomonadati</taxon>
        <taxon>Pseudomonadota</taxon>
        <taxon>Alphaproteobacteria</taxon>
        <taxon>Hyphomicrobiales</taxon>
        <taxon>Bartonellaceae</taxon>
        <taxon>Bartonella</taxon>
    </lineage>
</organism>